<gene>
    <name evidence="1" type="primary">ydiU</name>
    <name evidence="1" type="synonym">selO</name>
    <name type="ordered locus">PA14_66410</name>
</gene>
<organism>
    <name type="scientific">Pseudomonas aeruginosa (strain UCBPP-PA14)</name>
    <dbReference type="NCBI Taxonomy" id="208963"/>
    <lineage>
        <taxon>Bacteria</taxon>
        <taxon>Pseudomonadati</taxon>
        <taxon>Pseudomonadota</taxon>
        <taxon>Gammaproteobacteria</taxon>
        <taxon>Pseudomonadales</taxon>
        <taxon>Pseudomonadaceae</taxon>
        <taxon>Pseudomonas</taxon>
    </lineage>
</organism>
<evidence type="ECO:0000255" key="1">
    <source>
        <dbReference type="HAMAP-Rule" id="MF_00692"/>
    </source>
</evidence>
<keyword id="KW-0067">ATP-binding</keyword>
<keyword id="KW-0460">Magnesium</keyword>
<keyword id="KW-0464">Manganese</keyword>
<keyword id="KW-0479">Metal-binding</keyword>
<keyword id="KW-0547">Nucleotide-binding</keyword>
<keyword id="KW-0548">Nucleotidyltransferase</keyword>
<keyword id="KW-0808">Transferase</keyword>
<name>SELO_PSEAB</name>
<reference key="1">
    <citation type="journal article" date="2006" name="Genome Biol.">
        <title>Genomic analysis reveals that Pseudomonas aeruginosa virulence is combinatorial.</title>
        <authorList>
            <person name="Lee D.G."/>
            <person name="Urbach J.M."/>
            <person name="Wu G."/>
            <person name="Liberati N.T."/>
            <person name="Feinbaum R.L."/>
            <person name="Miyata S."/>
            <person name="Diggins L.T."/>
            <person name="He J."/>
            <person name="Saucier M."/>
            <person name="Deziel E."/>
            <person name="Friedman L."/>
            <person name="Li L."/>
            <person name="Grills G."/>
            <person name="Montgomery K."/>
            <person name="Kucherlapati R."/>
            <person name="Rahme L.G."/>
            <person name="Ausubel F.M."/>
        </authorList>
    </citation>
    <scope>NUCLEOTIDE SEQUENCE [LARGE SCALE GENOMIC DNA]</scope>
    <source>
        <strain>UCBPP-PA14</strain>
    </source>
</reference>
<dbReference type="EC" id="2.7.7.-" evidence="1"/>
<dbReference type="EC" id="2.7.7.108" evidence="1"/>
<dbReference type="EMBL" id="CP000438">
    <property type="protein sequence ID" value="ABJ14407.1"/>
    <property type="molecule type" value="Genomic_DNA"/>
</dbReference>
<dbReference type="RefSeq" id="WP_003110187.1">
    <property type="nucleotide sequence ID" value="NZ_CP034244.1"/>
</dbReference>
<dbReference type="SMR" id="Q02EZ4"/>
<dbReference type="KEGG" id="pau:PA14_66410"/>
<dbReference type="PseudoCAP" id="PA14_66410"/>
<dbReference type="HOGENOM" id="CLU_010245_4_0_6"/>
<dbReference type="BioCyc" id="PAER208963:G1G74-5603-MONOMER"/>
<dbReference type="Proteomes" id="UP000000653">
    <property type="component" value="Chromosome"/>
</dbReference>
<dbReference type="GO" id="GO:0070733">
    <property type="term" value="F:AMPylase activity"/>
    <property type="evidence" value="ECO:0007669"/>
    <property type="project" value="RHEA"/>
</dbReference>
<dbReference type="GO" id="GO:0005524">
    <property type="term" value="F:ATP binding"/>
    <property type="evidence" value="ECO:0007669"/>
    <property type="project" value="UniProtKB-UniRule"/>
</dbReference>
<dbReference type="GO" id="GO:0000287">
    <property type="term" value="F:magnesium ion binding"/>
    <property type="evidence" value="ECO:0007669"/>
    <property type="project" value="UniProtKB-UniRule"/>
</dbReference>
<dbReference type="HAMAP" id="MF_00692">
    <property type="entry name" value="YdiU_SelO"/>
    <property type="match status" value="1"/>
</dbReference>
<dbReference type="InterPro" id="IPR003846">
    <property type="entry name" value="SelO"/>
</dbReference>
<dbReference type="NCBIfam" id="NF000658">
    <property type="entry name" value="PRK00029.1"/>
    <property type="match status" value="1"/>
</dbReference>
<dbReference type="NCBIfam" id="NF045949">
    <property type="entry name" value="PrtAdtaseSelOPseudom"/>
    <property type="match status" value="1"/>
</dbReference>
<dbReference type="PANTHER" id="PTHR32057">
    <property type="entry name" value="PROTEIN ADENYLYLTRANSFERASE SELO, MITOCHONDRIAL"/>
    <property type="match status" value="1"/>
</dbReference>
<dbReference type="PANTHER" id="PTHR32057:SF14">
    <property type="entry name" value="PROTEIN ADENYLYLTRANSFERASE SELO, MITOCHONDRIAL"/>
    <property type="match status" value="1"/>
</dbReference>
<dbReference type="Pfam" id="PF02696">
    <property type="entry name" value="SelO"/>
    <property type="match status" value="1"/>
</dbReference>
<sequence length="486" mass="55108">MKSLDDLDFDNRFARLGDAFSTEVLPDPIAEPRLVVASPAALALLDLPAETSDEALFAELFGGHKLWSEAEPRAMVYSGHQFGSYNPRLGDGRGLLLGEVINQAGEHWDLHLKGAGQTPYSRMGDGRAVLRSSIREFLASEALPALGIPSSRALCVIGSSTPVWREKKESAATLLRLAPSHVRFGHFEYFYYTRQHDQLKQLAAFVQEHHFADCNAAERPYAAMFRQVVERNAELIARWQAYGFCHGVMNTDNMSILGITFDYGPYAFLDDFDANHICNHSDDAGRYSFSNQVPIAHWNLAALAQALTPLVEVDELRASLDLFLPLYQAHYLDLMRRRLGLGVAAENDQALVQELLQRMQGSAVDYSLFFRRLGEETPERALASLRDDFVDREAFDRWAEAYRRRVEEEGGDQESRRRRMHAVNPLYVLRNYLAQQAIEAAEQGDYTEVRLLHQVLSRPFEEQPGMERFTRRPPDWGRHLEISCSS</sequence>
<accession>Q02EZ4</accession>
<protein>
    <recommendedName>
        <fullName evidence="1">Protein nucleotidyltransferase YdiU</fullName>
        <ecNumber evidence="1">2.7.7.-</ecNumber>
    </recommendedName>
    <alternativeName>
        <fullName evidence="1">Protein adenylyltransferase YdiU</fullName>
        <ecNumber evidence="1">2.7.7.108</ecNumber>
    </alternativeName>
    <alternativeName>
        <fullName evidence="1">Protein uridylyltransferase YdiU</fullName>
        <ecNumber evidence="1">2.7.7.-</ecNumber>
    </alternativeName>
</protein>
<feature type="chain" id="PRO_1000045251" description="Protein nucleotidyltransferase YdiU">
    <location>
        <begin position="1"/>
        <end position="486"/>
    </location>
</feature>
<feature type="active site" description="Proton acceptor" evidence="1">
    <location>
        <position position="252"/>
    </location>
</feature>
<feature type="binding site" evidence="1">
    <location>
        <position position="90"/>
    </location>
    <ligand>
        <name>ATP</name>
        <dbReference type="ChEBI" id="CHEBI:30616"/>
    </ligand>
</feature>
<feature type="binding site" evidence="1">
    <location>
        <position position="92"/>
    </location>
    <ligand>
        <name>ATP</name>
        <dbReference type="ChEBI" id="CHEBI:30616"/>
    </ligand>
</feature>
<feature type="binding site" evidence="1">
    <location>
        <position position="93"/>
    </location>
    <ligand>
        <name>ATP</name>
        <dbReference type="ChEBI" id="CHEBI:30616"/>
    </ligand>
</feature>
<feature type="binding site" evidence="1">
    <location>
        <position position="113"/>
    </location>
    <ligand>
        <name>ATP</name>
        <dbReference type="ChEBI" id="CHEBI:30616"/>
    </ligand>
</feature>
<feature type="binding site" evidence="1">
    <location>
        <position position="125"/>
    </location>
    <ligand>
        <name>ATP</name>
        <dbReference type="ChEBI" id="CHEBI:30616"/>
    </ligand>
</feature>
<feature type="binding site" evidence="1">
    <location>
        <position position="126"/>
    </location>
    <ligand>
        <name>ATP</name>
        <dbReference type="ChEBI" id="CHEBI:30616"/>
    </ligand>
</feature>
<feature type="binding site" evidence="1">
    <location>
        <position position="176"/>
    </location>
    <ligand>
        <name>ATP</name>
        <dbReference type="ChEBI" id="CHEBI:30616"/>
    </ligand>
</feature>
<feature type="binding site" evidence="1">
    <location>
        <position position="183"/>
    </location>
    <ligand>
        <name>ATP</name>
        <dbReference type="ChEBI" id="CHEBI:30616"/>
    </ligand>
</feature>
<feature type="binding site" evidence="1">
    <location>
        <position position="253"/>
    </location>
    <ligand>
        <name>Mg(2+)</name>
        <dbReference type="ChEBI" id="CHEBI:18420"/>
    </ligand>
</feature>
<feature type="binding site" evidence="1">
    <location>
        <position position="262"/>
    </location>
    <ligand>
        <name>ATP</name>
        <dbReference type="ChEBI" id="CHEBI:30616"/>
    </ligand>
</feature>
<feature type="binding site" evidence="1">
    <location>
        <position position="262"/>
    </location>
    <ligand>
        <name>Mg(2+)</name>
        <dbReference type="ChEBI" id="CHEBI:18420"/>
    </ligand>
</feature>
<comment type="function">
    <text evidence="1">Nucleotidyltransferase involved in the post-translational modification of proteins. It can catalyze the addition of adenosine monophosphate (AMP) or uridine monophosphate (UMP) to a protein, resulting in modifications known as AMPylation and UMPylation.</text>
</comment>
<comment type="catalytic activity">
    <reaction evidence="1">
        <text>L-seryl-[protein] + ATP = 3-O-(5'-adenylyl)-L-seryl-[protein] + diphosphate</text>
        <dbReference type="Rhea" id="RHEA:58120"/>
        <dbReference type="Rhea" id="RHEA-COMP:9863"/>
        <dbReference type="Rhea" id="RHEA-COMP:15073"/>
        <dbReference type="ChEBI" id="CHEBI:29999"/>
        <dbReference type="ChEBI" id="CHEBI:30616"/>
        <dbReference type="ChEBI" id="CHEBI:33019"/>
        <dbReference type="ChEBI" id="CHEBI:142516"/>
        <dbReference type="EC" id="2.7.7.108"/>
    </reaction>
</comment>
<comment type="catalytic activity">
    <reaction evidence="1">
        <text>L-threonyl-[protein] + ATP = 3-O-(5'-adenylyl)-L-threonyl-[protein] + diphosphate</text>
        <dbReference type="Rhea" id="RHEA:54292"/>
        <dbReference type="Rhea" id="RHEA-COMP:11060"/>
        <dbReference type="Rhea" id="RHEA-COMP:13847"/>
        <dbReference type="ChEBI" id="CHEBI:30013"/>
        <dbReference type="ChEBI" id="CHEBI:30616"/>
        <dbReference type="ChEBI" id="CHEBI:33019"/>
        <dbReference type="ChEBI" id="CHEBI:138113"/>
        <dbReference type="EC" id="2.7.7.108"/>
    </reaction>
</comment>
<comment type="catalytic activity">
    <reaction evidence="1">
        <text>L-tyrosyl-[protein] + ATP = O-(5'-adenylyl)-L-tyrosyl-[protein] + diphosphate</text>
        <dbReference type="Rhea" id="RHEA:54288"/>
        <dbReference type="Rhea" id="RHEA-COMP:10136"/>
        <dbReference type="Rhea" id="RHEA-COMP:13846"/>
        <dbReference type="ChEBI" id="CHEBI:30616"/>
        <dbReference type="ChEBI" id="CHEBI:33019"/>
        <dbReference type="ChEBI" id="CHEBI:46858"/>
        <dbReference type="ChEBI" id="CHEBI:83624"/>
        <dbReference type="EC" id="2.7.7.108"/>
    </reaction>
</comment>
<comment type="catalytic activity">
    <reaction evidence="1">
        <text>L-histidyl-[protein] + UTP = N(tele)-(5'-uridylyl)-L-histidyl-[protein] + diphosphate</text>
        <dbReference type="Rhea" id="RHEA:83891"/>
        <dbReference type="Rhea" id="RHEA-COMP:9745"/>
        <dbReference type="Rhea" id="RHEA-COMP:20239"/>
        <dbReference type="ChEBI" id="CHEBI:29979"/>
        <dbReference type="ChEBI" id="CHEBI:33019"/>
        <dbReference type="ChEBI" id="CHEBI:46398"/>
        <dbReference type="ChEBI" id="CHEBI:233474"/>
    </reaction>
</comment>
<comment type="catalytic activity">
    <reaction evidence="1">
        <text>L-seryl-[protein] + UTP = O-(5'-uridylyl)-L-seryl-[protein] + diphosphate</text>
        <dbReference type="Rhea" id="RHEA:64604"/>
        <dbReference type="Rhea" id="RHEA-COMP:9863"/>
        <dbReference type="Rhea" id="RHEA-COMP:16635"/>
        <dbReference type="ChEBI" id="CHEBI:29999"/>
        <dbReference type="ChEBI" id="CHEBI:33019"/>
        <dbReference type="ChEBI" id="CHEBI:46398"/>
        <dbReference type="ChEBI" id="CHEBI:156051"/>
    </reaction>
</comment>
<comment type="catalytic activity">
    <reaction evidence="1">
        <text>L-tyrosyl-[protein] + UTP = O-(5'-uridylyl)-L-tyrosyl-[protein] + diphosphate</text>
        <dbReference type="Rhea" id="RHEA:83887"/>
        <dbReference type="Rhea" id="RHEA-COMP:10136"/>
        <dbReference type="Rhea" id="RHEA-COMP:20238"/>
        <dbReference type="ChEBI" id="CHEBI:33019"/>
        <dbReference type="ChEBI" id="CHEBI:46398"/>
        <dbReference type="ChEBI" id="CHEBI:46858"/>
        <dbReference type="ChEBI" id="CHEBI:90602"/>
    </reaction>
</comment>
<comment type="cofactor">
    <cofactor evidence="1">
        <name>Mg(2+)</name>
        <dbReference type="ChEBI" id="CHEBI:18420"/>
    </cofactor>
    <cofactor evidence="1">
        <name>Mn(2+)</name>
        <dbReference type="ChEBI" id="CHEBI:29035"/>
    </cofactor>
</comment>
<comment type="similarity">
    <text evidence="1">Belongs to the SELO family.</text>
</comment>
<proteinExistence type="inferred from homology"/>